<feature type="chain" id="PRO_0000237126" description="Small ribosomal subunit protein uS10c">
    <location>
        <begin position="1"/>
        <end position="103"/>
    </location>
</feature>
<dbReference type="EMBL" id="AY741371">
    <property type="protein sequence ID" value="AAX13925.1"/>
    <property type="molecule type" value="Genomic_DNA"/>
</dbReference>
<dbReference type="RefSeq" id="YP_277426.1">
    <property type="nucleotide sequence ID" value="NC_007288.1"/>
</dbReference>
<dbReference type="SMR" id="Q4G341"/>
<dbReference type="STRING" id="2903.Q4G341"/>
<dbReference type="GeneID" id="3562529"/>
<dbReference type="GO" id="GO:0009507">
    <property type="term" value="C:chloroplast"/>
    <property type="evidence" value="ECO:0007669"/>
    <property type="project" value="UniProtKB-SubCell"/>
</dbReference>
<dbReference type="GO" id="GO:1990904">
    <property type="term" value="C:ribonucleoprotein complex"/>
    <property type="evidence" value="ECO:0007669"/>
    <property type="project" value="UniProtKB-KW"/>
</dbReference>
<dbReference type="GO" id="GO:0005840">
    <property type="term" value="C:ribosome"/>
    <property type="evidence" value="ECO:0007669"/>
    <property type="project" value="UniProtKB-KW"/>
</dbReference>
<dbReference type="GO" id="GO:0003735">
    <property type="term" value="F:structural constituent of ribosome"/>
    <property type="evidence" value="ECO:0007669"/>
    <property type="project" value="InterPro"/>
</dbReference>
<dbReference type="GO" id="GO:0000049">
    <property type="term" value="F:tRNA binding"/>
    <property type="evidence" value="ECO:0007669"/>
    <property type="project" value="UniProtKB-UniRule"/>
</dbReference>
<dbReference type="GO" id="GO:0006412">
    <property type="term" value="P:translation"/>
    <property type="evidence" value="ECO:0007669"/>
    <property type="project" value="UniProtKB-UniRule"/>
</dbReference>
<dbReference type="FunFam" id="3.30.70.600:FF:000003">
    <property type="entry name" value="30S ribosomal protein S10"/>
    <property type="match status" value="1"/>
</dbReference>
<dbReference type="Gene3D" id="3.30.70.600">
    <property type="entry name" value="Ribosomal protein S10 domain"/>
    <property type="match status" value="1"/>
</dbReference>
<dbReference type="HAMAP" id="MF_00508">
    <property type="entry name" value="Ribosomal_uS10"/>
    <property type="match status" value="1"/>
</dbReference>
<dbReference type="InterPro" id="IPR001848">
    <property type="entry name" value="Ribosomal_uS10"/>
</dbReference>
<dbReference type="InterPro" id="IPR018268">
    <property type="entry name" value="Ribosomal_uS10_CS"/>
</dbReference>
<dbReference type="InterPro" id="IPR027486">
    <property type="entry name" value="Ribosomal_uS10_dom"/>
</dbReference>
<dbReference type="InterPro" id="IPR036838">
    <property type="entry name" value="Ribosomal_uS10_dom_sf"/>
</dbReference>
<dbReference type="NCBIfam" id="NF001861">
    <property type="entry name" value="PRK00596.1"/>
    <property type="match status" value="1"/>
</dbReference>
<dbReference type="NCBIfam" id="TIGR01049">
    <property type="entry name" value="rpsJ_bact"/>
    <property type="match status" value="1"/>
</dbReference>
<dbReference type="PANTHER" id="PTHR11700">
    <property type="entry name" value="30S RIBOSOMAL PROTEIN S10 FAMILY MEMBER"/>
    <property type="match status" value="1"/>
</dbReference>
<dbReference type="Pfam" id="PF00338">
    <property type="entry name" value="Ribosomal_S10"/>
    <property type="match status" value="1"/>
</dbReference>
<dbReference type="PRINTS" id="PR00971">
    <property type="entry name" value="RIBOSOMALS10"/>
</dbReference>
<dbReference type="SMART" id="SM01403">
    <property type="entry name" value="Ribosomal_S10"/>
    <property type="match status" value="1"/>
</dbReference>
<dbReference type="SUPFAM" id="SSF54999">
    <property type="entry name" value="Ribosomal protein S10"/>
    <property type="match status" value="1"/>
</dbReference>
<dbReference type="PROSITE" id="PS00361">
    <property type="entry name" value="RIBOSOMAL_S10"/>
    <property type="match status" value="1"/>
</dbReference>
<comment type="function">
    <text evidence="1">Involved in the binding of tRNA to the ribosomes.</text>
</comment>
<comment type="subunit">
    <text evidence="1">Part of the 30S ribosomal subunit.</text>
</comment>
<comment type="subcellular location">
    <subcellularLocation>
        <location evidence="1">Plastid</location>
        <location evidence="1">Chloroplast</location>
    </subcellularLocation>
</comment>
<comment type="similarity">
    <text evidence="1">Belongs to the universal ribosomal protein uS10 family.</text>
</comment>
<reference key="1">
    <citation type="journal article" date="2005" name="DNA Res.">
        <title>The complete plastid genome sequence of the haptophyte Emiliania huxleyi: a comparison to other plastid genomes.</title>
        <authorList>
            <person name="Sanchez-Puerta M.V."/>
            <person name="Bachvaroff T.R."/>
            <person name="Delwiche C.F."/>
        </authorList>
    </citation>
    <scope>NUCLEOTIDE SEQUENCE [LARGE SCALE GENOMIC DNA]</scope>
    <source>
        <strain>CCMP373 / CSIRO-CS-57 / BT6</strain>
    </source>
</reference>
<geneLocation type="chloroplast"/>
<evidence type="ECO:0000255" key="1">
    <source>
        <dbReference type="HAMAP-Rule" id="MF_00508"/>
    </source>
</evidence>
<evidence type="ECO:0000305" key="2"/>
<sequence>MGIQKLRIALKAYETSLLNDSCTQIINAVETGGVKAIGPIPLPTKRRIYCVLRSPHVNKDAREHFEMRTHKKIIDVYKPTDDVMENLRKLDLAAGVDVEIKSL</sequence>
<protein>
    <recommendedName>
        <fullName evidence="1">Small ribosomal subunit protein uS10c</fullName>
    </recommendedName>
    <alternativeName>
        <fullName evidence="2">30S ribosomal protein S10, chloroplastic</fullName>
    </alternativeName>
</protein>
<keyword id="KW-0150">Chloroplast</keyword>
<keyword id="KW-0934">Plastid</keyword>
<keyword id="KW-0687">Ribonucleoprotein</keyword>
<keyword id="KW-0689">Ribosomal protein</keyword>
<proteinExistence type="inferred from homology"/>
<organism>
    <name type="scientific">Emiliania huxleyi</name>
    <name type="common">Coccolithophore</name>
    <name type="synonym">Pontosphaera huxleyi</name>
    <dbReference type="NCBI Taxonomy" id="2903"/>
    <lineage>
        <taxon>Eukaryota</taxon>
        <taxon>Haptista</taxon>
        <taxon>Haptophyta</taxon>
        <taxon>Prymnesiophyceae</taxon>
        <taxon>Isochrysidales</taxon>
        <taxon>Noelaerhabdaceae</taxon>
        <taxon>Emiliania</taxon>
    </lineage>
</organism>
<name>RR10_EMIHU</name>
<gene>
    <name evidence="1" type="primary">rps10</name>
</gene>
<accession>Q4G341</accession>